<proteinExistence type="inferred from homology"/>
<sequence length="228" mass="23337">MPAFFVTGTDTEIGKTTIAAGLLHAARSAGLSTAAAKPVASGCEPTAQGLRNGDALVLLGQCSLALAYEQVNPLAFAPAIAPHLAAREAGVELSAARLHEAVREVLALQADFTLVEGAGGWRVPLLGRENLSDLARLLALPVVLVVGVRLGCINHALLSAEAILGDGLALAGWVANVVDPATSRLEENLATLAERLPAPCLGRVPRLEEATPAAVAAHLDLRPLGIGL</sequence>
<feature type="chain" id="PRO_0000187982" description="ATP-dependent dethiobiotin synthetase BioD">
    <location>
        <begin position="1"/>
        <end position="228"/>
    </location>
</feature>
<feature type="active site" evidence="1">
    <location>
        <position position="37"/>
    </location>
</feature>
<feature type="binding site" evidence="1">
    <location>
        <begin position="12"/>
        <end position="17"/>
    </location>
    <ligand>
        <name>ATP</name>
        <dbReference type="ChEBI" id="CHEBI:30616"/>
    </ligand>
</feature>
<feature type="binding site" evidence="1">
    <location>
        <position position="16"/>
    </location>
    <ligand>
        <name>Mg(2+)</name>
        <dbReference type="ChEBI" id="CHEBI:18420"/>
    </ligand>
</feature>
<feature type="binding site" evidence="1">
    <location>
        <position position="41"/>
    </location>
    <ligand>
        <name>substrate</name>
    </ligand>
</feature>
<feature type="binding site" evidence="1">
    <location>
        <position position="54"/>
    </location>
    <ligand>
        <name>ATP</name>
        <dbReference type="ChEBI" id="CHEBI:30616"/>
    </ligand>
</feature>
<feature type="binding site" evidence="1">
    <location>
        <position position="54"/>
    </location>
    <ligand>
        <name>Mg(2+)</name>
        <dbReference type="ChEBI" id="CHEBI:18420"/>
    </ligand>
</feature>
<feature type="binding site" evidence="1">
    <location>
        <begin position="116"/>
        <end position="119"/>
    </location>
    <ligand>
        <name>ATP</name>
        <dbReference type="ChEBI" id="CHEBI:30616"/>
    </ligand>
</feature>
<feature type="binding site" evidence="1">
    <location>
        <position position="116"/>
    </location>
    <ligand>
        <name>Mg(2+)</name>
        <dbReference type="ChEBI" id="CHEBI:18420"/>
    </ligand>
</feature>
<feature type="binding site" evidence="1">
    <location>
        <begin position="205"/>
        <end position="207"/>
    </location>
    <ligand>
        <name>ATP</name>
        <dbReference type="ChEBI" id="CHEBI:30616"/>
    </ligand>
</feature>
<organism>
    <name type="scientific">Pseudomonas aeruginosa (strain ATCC 15692 / DSM 22644 / CIP 104116 / JCM 14847 / LMG 12228 / 1C / PRS 101 / PAO1)</name>
    <dbReference type="NCBI Taxonomy" id="208964"/>
    <lineage>
        <taxon>Bacteria</taxon>
        <taxon>Pseudomonadati</taxon>
        <taxon>Pseudomonadota</taxon>
        <taxon>Gammaproteobacteria</taxon>
        <taxon>Pseudomonadales</taxon>
        <taxon>Pseudomonadaceae</taxon>
        <taxon>Pseudomonas</taxon>
    </lineage>
</organism>
<protein>
    <recommendedName>
        <fullName evidence="1">ATP-dependent dethiobiotin synthetase BioD</fullName>
        <ecNumber evidence="1">6.3.3.3</ecNumber>
    </recommendedName>
    <alternativeName>
        <fullName evidence="1">DTB synthetase</fullName>
        <shortName evidence="1">DTBS</shortName>
    </alternativeName>
    <alternativeName>
        <fullName evidence="1">Dethiobiotin synthase</fullName>
    </alternativeName>
</protein>
<comment type="function">
    <text evidence="1">Catalyzes a mechanistically unusual reaction, the ATP-dependent insertion of CO2 between the N7 and N8 nitrogen atoms of 7,8-diaminopelargonic acid (DAPA, also called 7,8-diammoniononanoate) to form a ureido ring.</text>
</comment>
<comment type="catalytic activity">
    <reaction evidence="1">
        <text>(7R,8S)-7,8-diammoniononanoate + CO2 + ATP = (4R,5S)-dethiobiotin + ADP + phosphate + 3 H(+)</text>
        <dbReference type="Rhea" id="RHEA:15805"/>
        <dbReference type="ChEBI" id="CHEBI:15378"/>
        <dbReference type="ChEBI" id="CHEBI:16526"/>
        <dbReference type="ChEBI" id="CHEBI:30616"/>
        <dbReference type="ChEBI" id="CHEBI:43474"/>
        <dbReference type="ChEBI" id="CHEBI:149469"/>
        <dbReference type="ChEBI" id="CHEBI:149473"/>
        <dbReference type="ChEBI" id="CHEBI:456216"/>
        <dbReference type="EC" id="6.3.3.3"/>
    </reaction>
</comment>
<comment type="cofactor">
    <cofactor evidence="1">
        <name>Mg(2+)</name>
        <dbReference type="ChEBI" id="CHEBI:18420"/>
    </cofactor>
</comment>
<comment type="pathway">
    <text evidence="1">Cofactor biosynthesis; biotin biosynthesis; biotin from 7,8-diaminononanoate: step 1/2.</text>
</comment>
<comment type="subunit">
    <text evidence="1">Homodimer.</text>
</comment>
<comment type="subcellular location">
    <subcellularLocation>
        <location evidence="1">Cytoplasm</location>
    </subcellularLocation>
</comment>
<comment type="similarity">
    <text evidence="1">Belongs to the dethiobiotin synthetase family.</text>
</comment>
<reference key="1">
    <citation type="journal article" date="2000" name="Nature">
        <title>Complete genome sequence of Pseudomonas aeruginosa PAO1, an opportunistic pathogen.</title>
        <authorList>
            <person name="Stover C.K."/>
            <person name="Pham X.-Q.T."/>
            <person name="Erwin A.L."/>
            <person name="Mizoguchi S.D."/>
            <person name="Warrener P."/>
            <person name="Hickey M.J."/>
            <person name="Brinkman F.S.L."/>
            <person name="Hufnagle W.O."/>
            <person name="Kowalik D.J."/>
            <person name="Lagrou M."/>
            <person name="Garber R.L."/>
            <person name="Goltry L."/>
            <person name="Tolentino E."/>
            <person name="Westbrock-Wadman S."/>
            <person name="Yuan Y."/>
            <person name="Brody L.L."/>
            <person name="Coulter S.N."/>
            <person name="Folger K.R."/>
            <person name="Kas A."/>
            <person name="Larbig K."/>
            <person name="Lim R.M."/>
            <person name="Smith K.A."/>
            <person name="Spencer D.H."/>
            <person name="Wong G.K.-S."/>
            <person name="Wu Z."/>
            <person name="Paulsen I.T."/>
            <person name="Reizer J."/>
            <person name="Saier M.H. Jr."/>
            <person name="Hancock R.E.W."/>
            <person name="Lory S."/>
            <person name="Olson M.V."/>
        </authorList>
    </citation>
    <scope>NUCLEOTIDE SEQUENCE [LARGE SCALE GENOMIC DNA]</scope>
    <source>
        <strain>ATCC 15692 / DSM 22644 / CIP 104116 / JCM 14847 / LMG 12228 / 1C / PRS 101 / PAO1</strain>
    </source>
</reference>
<name>BIOD_PSEAE</name>
<gene>
    <name evidence="1" type="primary">bioD</name>
    <name type="ordered locus">PA0504</name>
</gene>
<evidence type="ECO:0000255" key="1">
    <source>
        <dbReference type="HAMAP-Rule" id="MF_00336"/>
    </source>
</evidence>
<keyword id="KW-0067">ATP-binding</keyword>
<keyword id="KW-0093">Biotin biosynthesis</keyword>
<keyword id="KW-0963">Cytoplasm</keyword>
<keyword id="KW-0436">Ligase</keyword>
<keyword id="KW-0460">Magnesium</keyword>
<keyword id="KW-0479">Metal-binding</keyword>
<keyword id="KW-0547">Nucleotide-binding</keyword>
<keyword id="KW-1185">Reference proteome</keyword>
<accession>Q9I614</accession>
<dbReference type="EC" id="6.3.3.3" evidence="1"/>
<dbReference type="EMBL" id="AE004091">
    <property type="protein sequence ID" value="AAG03893.1"/>
    <property type="molecule type" value="Genomic_DNA"/>
</dbReference>
<dbReference type="PIR" id="B83583">
    <property type="entry name" value="B83583"/>
</dbReference>
<dbReference type="RefSeq" id="NP_249195.1">
    <property type="nucleotide sequence ID" value="NC_002516.2"/>
</dbReference>
<dbReference type="RefSeq" id="WP_003103336.1">
    <property type="nucleotide sequence ID" value="NZ_QZGE01000010.1"/>
</dbReference>
<dbReference type="SMR" id="Q9I614"/>
<dbReference type="FunCoup" id="Q9I614">
    <property type="interactions" value="528"/>
</dbReference>
<dbReference type="STRING" id="208964.PA0504"/>
<dbReference type="REPRODUCTION-2DPAGE" id="Q9I614"/>
<dbReference type="PaxDb" id="208964-PA0504"/>
<dbReference type="DNASU" id="878220"/>
<dbReference type="GeneID" id="878220"/>
<dbReference type="KEGG" id="pae:PA0504"/>
<dbReference type="PATRIC" id="fig|208964.12.peg.532"/>
<dbReference type="PseudoCAP" id="PA0504"/>
<dbReference type="HOGENOM" id="CLU_072551_0_0_6"/>
<dbReference type="InParanoid" id="Q9I614"/>
<dbReference type="OrthoDB" id="9802097at2"/>
<dbReference type="PhylomeDB" id="Q9I614"/>
<dbReference type="BioCyc" id="PAER208964:G1FZ6-509-MONOMER"/>
<dbReference type="UniPathway" id="UPA00078">
    <property type="reaction ID" value="UER00161"/>
</dbReference>
<dbReference type="Proteomes" id="UP000002438">
    <property type="component" value="Chromosome"/>
</dbReference>
<dbReference type="GO" id="GO:0005829">
    <property type="term" value="C:cytosol"/>
    <property type="evidence" value="ECO:0000318"/>
    <property type="project" value="GO_Central"/>
</dbReference>
<dbReference type="GO" id="GO:0005524">
    <property type="term" value="F:ATP binding"/>
    <property type="evidence" value="ECO:0007669"/>
    <property type="project" value="UniProtKB-UniRule"/>
</dbReference>
<dbReference type="GO" id="GO:0004141">
    <property type="term" value="F:dethiobiotin synthase activity"/>
    <property type="evidence" value="ECO:0000318"/>
    <property type="project" value="GO_Central"/>
</dbReference>
<dbReference type="GO" id="GO:0000287">
    <property type="term" value="F:magnesium ion binding"/>
    <property type="evidence" value="ECO:0007669"/>
    <property type="project" value="UniProtKB-UniRule"/>
</dbReference>
<dbReference type="GO" id="GO:0009102">
    <property type="term" value="P:biotin biosynthetic process"/>
    <property type="evidence" value="ECO:0000318"/>
    <property type="project" value="GO_Central"/>
</dbReference>
<dbReference type="CDD" id="cd03109">
    <property type="entry name" value="DTBS"/>
    <property type="match status" value="1"/>
</dbReference>
<dbReference type="FunFam" id="3.40.50.300:FF:000292">
    <property type="entry name" value="ATP-dependent dethiobiotin synthetase BioD"/>
    <property type="match status" value="1"/>
</dbReference>
<dbReference type="Gene3D" id="3.40.50.300">
    <property type="entry name" value="P-loop containing nucleotide triphosphate hydrolases"/>
    <property type="match status" value="1"/>
</dbReference>
<dbReference type="HAMAP" id="MF_00336">
    <property type="entry name" value="BioD"/>
    <property type="match status" value="1"/>
</dbReference>
<dbReference type="InterPro" id="IPR004472">
    <property type="entry name" value="DTB_synth_BioD"/>
</dbReference>
<dbReference type="InterPro" id="IPR027417">
    <property type="entry name" value="P-loop_NTPase"/>
</dbReference>
<dbReference type="NCBIfam" id="TIGR00347">
    <property type="entry name" value="bioD"/>
    <property type="match status" value="1"/>
</dbReference>
<dbReference type="PANTHER" id="PTHR43210">
    <property type="entry name" value="DETHIOBIOTIN SYNTHETASE"/>
    <property type="match status" value="1"/>
</dbReference>
<dbReference type="PANTHER" id="PTHR43210:SF5">
    <property type="entry name" value="DETHIOBIOTIN SYNTHETASE"/>
    <property type="match status" value="1"/>
</dbReference>
<dbReference type="Pfam" id="PF13500">
    <property type="entry name" value="AAA_26"/>
    <property type="match status" value="1"/>
</dbReference>
<dbReference type="PIRSF" id="PIRSF006755">
    <property type="entry name" value="DTB_synth"/>
    <property type="match status" value="1"/>
</dbReference>
<dbReference type="SUPFAM" id="SSF52540">
    <property type="entry name" value="P-loop containing nucleoside triphosphate hydrolases"/>
    <property type="match status" value="1"/>
</dbReference>